<protein>
    <recommendedName>
        <fullName evidence="1">Phosphoserine aminotransferase</fullName>
        <ecNumber evidence="1">2.6.1.52</ecNumber>
    </recommendedName>
    <alternativeName>
        <fullName evidence="1">Phosphohydroxythreonine aminotransferase</fullName>
        <shortName evidence="1">PSAT</shortName>
    </alternativeName>
</protein>
<keyword id="KW-0028">Amino-acid biosynthesis</keyword>
<keyword id="KW-0032">Aminotransferase</keyword>
<keyword id="KW-0963">Cytoplasm</keyword>
<keyword id="KW-0663">Pyridoxal phosphate</keyword>
<keyword id="KW-0664">Pyridoxine biosynthesis</keyword>
<keyword id="KW-0718">Serine biosynthesis</keyword>
<keyword id="KW-0808">Transferase</keyword>
<reference key="1">
    <citation type="submission" date="2007-03" db="EMBL/GenBank/DDBJ databases">
        <title>Complete sequence of chromosome 1 of Burkholderia vietnamiensis G4.</title>
        <authorList>
            <consortium name="US DOE Joint Genome Institute"/>
            <person name="Copeland A."/>
            <person name="Lucas S."/>
            <person name="Lapidus A."/>
            <person name="Barry K."/>
            <person name="Detter J.C."/>
            <person name="Glavina del Rio T."/>
            <person name="Hammon N."/>
            <person name="Israni S."/>
            <person name="Dalin E."/>
            <person name="Tice H."/>
            <person name="Pitluck S."/>
            <person name="Chain P."/>
            <person name="Malfatti S."/>
            <person name="Shin M."/>
            <person name="Vergez L."/>
            <person name="Schmutz J."/>
            <person name="Larimer F."/>
            <person name="Land M."/>
            <person name="Hauser L."/>
            <person name="Kyrpides N."/>
            <person name="Tiedje J."/>
            <person name="Richardson P."/>
        </authorList>
    </citation>
    <scope>NUCLEOTIDE SEQUENCE [LARGE SCALE GENOMIC DNA]</scope>
    <source>
        <strain>G4 / LMG 22486</strain>
    </source>
</reference>
<evidence type="ECO:0000255" key="1">
    <source>
        <dbReference type="HAMAP-Rule" id="MF_00160"/>
    </source>
</evidence>
<gene>
    <name evidence="1" type="primary">serC</name>
    <name type="ordered locus">Bcep1808_0963</name>
</gene>
<organism>
    <name type="scientific">Burkholderia vietnamiensis (strain G4 / LMG 22486)</name>
    <name type="common">Burkholderia cepacia (strain R1808)</name>
    <dbReference type="NCBI Taxonomy" id="269482"/>
    <lineage>
        <taxon>Bacteria</taxon>
        <taxon>Pseudomonadati</taxon>
        <taxon>Pseudomonadota</taxon>
        <taxon>Betaproteobacteria</taxon>
        <taxon>Burkholderiales</taxon>
        <taxon>Burkholderiaceae</taxon>
        <taxon>Burkholderia</taxon>
        <taxon>Burkholderia cepacia complex</taxon>
    </lineage>
</organism>
<proteinExistence type="inferred from homology"/>
<dbReference type="EC" id="2.6.1.52" evidence="1"/>
<dbReference type="EMBL" id="CP000614">
    <property type="protein sequence ID" value="ABO53974.1"/>
    <property type="molecule type" value="Genomic_DNA"/>
</dbReference>
<dbReference type="SMR" id="A4JCH1"/>
<dbReference type="KEGG" id="bvi:Bcep1808_0963"/>
<dbReference type="eggNOG" id="COG1932">
    <property type="taxonomic scope" value="Bacteria"/>
</dbReference>
<dbReference type="HOGENOM" id="CLU_034866_0_2_4"/>
<dbReference type="UniPathway" id="UPA00135">
    <property type="reaction ID" value="UER00197"/>
</dbReference>
<dbReference type="UniPathway" id="UPA00244">
    <property type="reaction ID" value="UER00311"/>
</dbReference>
<dbReference type="Proteomes" id="UP000002287">
    <property type="component" value="Chromosome 1"/>
</dbReference>
<dbReference type="GO" id="GO:0005737">
    <property type="term" value="C:cytoplasm"/>
    <property type="evidence" value="ECO:0007669"/>
    <property type="project" value="UniProtKB-SubCell"/>
</dbReference>
<dbReference type="GO" id="GO:0004648">
    <property type="term" value="F:O-phospho-L-serine:2-oxoglutarate aminotransferase activity"/>
    <property type="evidence" value="ECO:0007669"/>
    <property type="project" value="UniProtKB-UniRule"/>
</dbReference>
<dbReference type="GO" id="GO:0030170">
    <property type="term" value="F:pyridoxal phosphate binding"/>
    <property type="evidence" value="ECO:0007669"/>
    <property type="project" value="UniProtKB-UniRule"/>
</dbReference>
<dbReference type="GO" id="GO:0006564">
    <property type="term" value="P:L-serine biosynthetic process"/>
    <property type="evidence" value="ECO:0007669"/>
    <property type="project" value="UniProtKB-UniRule"/>
</dbReference>
<dbReference type="GO" id="GO:0008615">
    <property type="term" value="P:pyridoxine biosynthetic process"/>
    <property type="evidence" value="ECO:0007669"/>
    <property type="project" value="UniProtKB-UniRule"/>
</dbReference>
<dbReference type="CDD" id="cd00611">
    <property type="entry name" value="PSAT_like"/>
    <property type="match status" value="1"/>
</dbReference>
<dbReference type="FunFam" id="3.40.640.10:FF:000010">
    <property type="entry name" value="Phosphoserine aminotransferase"/>
    <property type="match status" value="1"/>
</dbReference>
<dbReference type="FunFam" id="3.90.1150.10:FF:000006">
    <property type="entry name" value="Phosphoserine aminotransferase"/>
    <property type="match status" value="1"/>
</dbReference>
<dbReference type="Gene3D" id="3.90.1150.10">
    <property type="entry name" value="Aspartate Aminotransferase, domain 1"/>
    <property type="match status" value="1"/>
</dbReference>
<dbReference type="Gene3D" id="3.40.640.10">
    <property type="entry name" value="Type I PLP-dependent aspartate aminotransferase-like (Major domain)"/>
    <property type="match status" value="1"/>
</dbReference>
<dbReference type="HAMAP" id="MF_00160">
    <property type="entry name" value="SerC_aminotrans_5"/>
    <property type="match status" value="1"/>
</dbReference>
<dbReference type="InterPro" id="IPR000192">
    <property type="entry name" value="Aminotrans_V_dom"/>
</dbReference>
<dbReference type="InterPro" id="IPR020578">
    <property type="entry name" value="Aminotrans_V_PyrdxlP_BS"/>
</dbReference>
<dbReference type="InterPro" id="IPR022278">
    <property type="entry name" value="Pser_aminoTfrase"/>
</dbReference>
<dbReference type="InterPro" id="IPR015424">
    <property type="entry name" value="PyrdxlP-dep_Trfase"/>
</dbReference>
<dbReference type="InterPro" id="IPR015421">
    <property type="entry name" value="PyrdxlP-dep_Trfase_major"/>
</dbReference>
<dbReference type="InterPro" id="IPR015422">
    <property type="entry name" value="PyrdxlP-dep_Trfase_small"/>
</dbReference>
<dbReference type="NCBIfam" id="NF003764">
    <property type="entry name" value="PRK05355.1"/>
    <property type="match status" value="1"/>
</dbReference>
<dbReference type="NCBIfam" id="TIGR01364">
    <property type="entry name" value="serC_1"/>
    <property type="match status" value="1"/>
</dbReference>
<dbReference type="PANTHER" id="PTHR43247">
    <property type="entry name" value="PHOSPHOSERINE AMINOTRANSFERASE"/>
    <property type="match status" value="1"/>
</dbReference>
<dbReference type="PANTHER" id="PTHR43247:SF1">
    <property type="entry name" value="PHOSPHOSERINE AMINOTRANSFERASE"/>
    <property type="match status" value="1"/>
</dbReference>
<dbReference type="Pfam" id="PF00266">
    <property type="entry name" value="Aminotran_5"/>
    <property type="match status" value="1"/>
</dbReference>
<dbReference type="PIRSF" id="PIRSF000525">
    <property type="entry name" value="SerC"/>
    <property type="match status" value="1"/>
</dbReference>
<dbReference type="SUPFAM" id="SSF53383">
    <property type="entry name" value="PLP-dependent transferases"/>
    <property type="match status" value="1"/>
</dbReference>
<dbReference type="PROSITE" id="PS00595">
    <property type="entry name" value="AA_TRANSFER_CLASS_5"/>
    <property type="match status" value="1"/>
</dbReference>
<comment type="function">
    <text evidence="1">Catalyzes the reversible conversion of 3-phosphohydroxypyruvate to phosphoserine and of 3-hydroxy-2-oxo-4-phosphonooxybutanoate to phosphohydroxythreonine.</text>
</comment>
<comment type="catalytic activity">
    <reaction evidence="1">
        <text>O-phospho-L-serine + 2-oxoglutarate = 3-phosphooxypyruvate + L-glutamate</text>
        <dbReference type="Rhea" id="RHEA:14329"/>
        <dbReference type="ChEBI" id="CHEBI:16810"/>
        <dbReference type="ChEBI" id="CHEBI:18110"/>
        <dbReference type="ChEBI" id="CHEBI:29985"/>
        <dbReference type="ChEBI" id="CHEBI:57524"/>
        <dbReference type="EC" id="2.6.1.52"/>
    </reaction>
</comment>
<comment type="catalytic activity">
    <reaction evidence="1">
        <text>4-(phosphooxy)-L-threonine + 2-oxoglutarate = (R)-3-hydroxy-2-oxo-4-phosphooxybutanoate + L-glutamate</text>
        <dbReference type="Rhea" id="RHEA:16573"/>
        <dbReference type="ChEBI" id="CHEBI:16810"/>
        <dbReference type="ChEBI" id="CHEBI:29985"/>
        <dbReference type="ChEBI" id="CHEBI:58452"/>
        <dbReference type="ChEBI" id="CHEBI:58538"/>
        <dbReference type="EC" id="2.6.1.52"/>
    </reaction>
</comment>
<comment type="cofactor">
    <cofactor evidence="1">
        <name>pyridoxal 5'-phosphate</name>
        <dbReference type="ChEBI" id="CHEBI:597326"/>
    </cofactor>
    <text evidence="1">Binds 1 pyridoxal phosphate per subunit.</text>
</comment>
<comment type="pathway">
    <text evidence="1">Amino-acid biosynthesis; L-serine biosynthesis; L-serine from 3-phospho-D-glycerate: step 2/3.</text>
</comment>
<comment type="pathway">
    <text evidence="1">Cofactor biosynthesis; pyridoxine 5'-phosphate biosynthesis; pyridoxine 5'-phosphate from D-erythrose 4-phosphate: step 3/5.</text>
</comment>
<comment type="subunit">
    <text evidence="1">Homodimer.</text>
</comment>
<comment type="subcellular location">
    <subcellularLocation>
        <location evidence="1">Cytoplasm</location>
    </subcellularLocation>
</comment>
<comment type="similarity">
    <text evidence="1">Belongs to the class-V pyridoxal-phosphate-dependent aminotransferase family. SerC subfamily.</text>
</comment>
<accession>A4JCH1</accession>
<feature type="chain" id="PRO_1000058206" description="Phosphoserine aminotransferase">
    <location>
        <begin position="1"/>
        <end position="360"/>
    </location>
</feature>
<feature type="binding site" evidence="1">
    <location>
        <position position="41"/>
    </location>
    <ligand>
        <name>L-glutamate</name>
        <dbReference type="ChEBI" id="CHEBI:29985"/>
    </ligand>
</feature>
<feature type="binding site" evidence="1">
    <location>
        <position position="101"/>
    </location>
    <ligand>
        <name>pyridoxal 5'-phosphate</name>
        <dbReference type="ChEBI" id="CHEBI:597326"/>
    </ligand>
</feature>
<feature type="binding site" evidence="1">
    <location>
        <position position="152"/>
    </location>
    <ligand>
        <name>pyridoxal 5'-phosphate</name>
        <dbReference type="ChEBI" id="CHEBI:597326"/>
    </ligand>
</feature>
<feature type="binding site" evidence="1">
    <location>
        <position position="172"/>
    </location>
    <ligand>
        <name>pyridoxal 5'-phosphate</name>
        <dbReference type="ChEBI" id="CHEBI:597326"/>
    </ligand>
</feature>
<feature type="binding site" evidence="1">
    <location>
        <position position="195"/>
    </location>
    <ligand>
        <name>pyridoxal 5'-phosphate</name>
        <dbReference type="ChEBI" id="CHEBI:597326"/>
    </ligand>
</feature>
<feature type="binding site" evidence="1">
    <location>
        <begin position="237"/>
        <end position="238"/>
    </location>
    <ligand>
        <name>pyridoxal 5'-phosphate</name>
        <dbReference type="ChEBI" id="CHEBI:597326"/>
    </ligand>
</feature>
<feature type="modified residue" description="N6-(pyridoxal phosphate)lysine" evidence="1">
    <location>
        <position position="196"/>
    </location>
</feature>
<name>SERC_BURVG</name>
<sequence length="360" mass="39617">MRVFNFSAGPAALPEEVLRQAADEMLDWHGSGMSVMEMSHRGKEFMSIHETALADLRELLDVPASHRILFLQGGGIAENAIVPMNLLGWRKSADFVVTGSWSQKSFNEAKKYCTPHLAASGKTADGFTRAPTRAEWQLSDDPAYVHLCTNETIDGVETFEIPDLGDVPLVADVSSHILSRPMDVAKYGVLFGGAQKNIGMAGVTVVIVREDLLDRALSICPSAFEWKTVAENNSLYNTPPTYAIYIAGLVFQWLKRQGGLAAIEARNIEKAKLLYDTIDASGFYLNKVEPAVRSRMNVPFFLADETRNEDFLAGAKARGLLQLKGHKSVGGMRASIYNAVPLEGVKALVEYMKDFERRDA</sequence>